<dbReference type="EC" id="3.1.3.48"/>
<dbReference type="EMBL" id="M68941">
    <property type="protein sequence ID" value="AAA36530.1"/>
    <property type="molecule type" value="mRNA"/>
</dbReference>
<dbReference type="EMBL" id="AK314836">
    <property type="protein sequence ID" value="BAG37355.1"/>
    <property type="molecule type" value="mRNA"/>
</dbReference>
<dbReference type="EMBL" id="BC010674">
    <property type="protein sequence ID" value="AAH10674.1"/>
    <property type="molecule type" value="mRNA"/>
</dbReference>
<dbReference type="CCDS" id="CCDS2129.1"/>
<dbReference type="PIR" id="A41105">
    <property type="entry name" value="A41105"/>
</dbReference>
<dbReference type="RefSeq" id="NP_002821.1">
    <property type="nucleotide sequence ID" value="NM_002830.4"/>
</dbReference>
<dbReference type="RefSeq" id="XP_016860089.1">
    <property type="nucleotide sequence ID" value="XM_017004600.1"/>
</dbReference>
<dbReference type="PDB" id="2CS5">
    <property type="method" value="NMR"/>
    <property type="chains" value="A=507-612"/>
</dbReference>
<dbReference type="PDB" id="2I75">
    <property type="method" value="X-ray"/>
    <property type="resolution" value="2.45 A"/>
    <property type="chains" value="A=611-926"/>
</dbReference>
<dbReference type="PDB" id="2VPH">
    <property type="method" value="X-ray"/>
    <property type="resolution" value="1.90 A"/>
    <property type="chains" value="A/B=513-606"/>
</dbReference>
<dbReference type="PDB" id="3NFK">
    <property type="method" value="X-ray"/>
    <property type="resolution" value="1.43 A"/>
    <property type="chains" value="A/B=499-604"/>
</dbReference>
<dbReference type="PDB" id="3NFL">
    <property type="method" value="X-ray"/>
    <property type="resolution" value="1.91 A"/>
    <property type="chains" value="A/B/C/D=499-604"/>
</dbReference>
<dbReference type="PDB" id="5EYZ">
    <property type="method" value="X-ray"/>
    <property type="resolution" value="2.09 A"/>
    <property type="chains" value="A/B/C/D=499-604"/>
</dbReference>
<dbReference type="PDB" id="5EZ0">
    <property type="method" value="X-ray"/>
    <property type="resolution" value="2.35 A"/>
    <property type="chains" value="A/B/C/D=499-604"/>
</dbReference>
<dbReference type="PDB" id="7VZE">
    <property type="method" value="X-ray"/>
    <property type="resolution" value="2.88 A"/>
    <property type="chains" value="A/B/C/D=513-603"/>
</dbReference>
<dbReference type="PDBsum" id="2CS5"/>
<dbReference type="PDBsum" id="2I75"/>
<dbReference type="PDBsum" id="2VPH"/>
<dbReference type="PDBsum" id="3NFK"/>
<dbReference type="PDBsum" id="3NFL"/>
<dbReference type="PDBsum" id="5EYZ"/>
<dbReference type="PDBsum" id="5EZ0"/>
<dbReference type="PDBsum" id="7VZE"/>
<dbReference type="BMRB" id="P29074"/>
<dbReference type="SMR" id="P29074"/>
<dbReference type="BioGRID" id="111741">
    <property type="interactions" value="50"/>
</dbReference>
<dbReference type="DIP" id="DIP-34634N"/>
<dbReference type="FunCoup" id="P29074">
    <property type="interactions" value="2988"/>
</dbReference>
<dbReference type="IntAct" id="P29074">
    <property type="interactions" value="43"/>
</dbReference>
<dbReference type="MINT" id="P29074"/>
<dbReference type="STRING" id="9606.ENSP00000263708"/>
<dbReference type="BindingDB" id="P29074"/>
<dbReference type="ChEMBL" id="CHEMBL3165"/>
<dbReference type="DrugBank" id="DB00630">
    <property type="generic name" value="Alendronic acid"/>
</dbReference>
<dbReference type="DEPOD" id="PTPN4"/>
<dbReference type="GlyGen" id="P29074">
    <property type="glycosylation" value="3 sites, 1 O-linked glycan (1 site)"/>
</dbReference>
<dbReference type="iPTMnet" id="P29074"/>
<dbReference type="PhosphoSitePlus" id="P29074"/>
<dbReference type="BioMuta" id="PTPN4"/>
<dbReference type="DMDM" id="131531"/>
<dbReference type="jPOST" id="P29074"/>
<dbReference type="MassIVE" id="P29074"/>
<dbReference type="PaxDb" id="9606-ENSP00000263708"/>
<dbReference type="PeptideAtlas" id="P29074"/>
<dbReference type="ProteomicsDB" id="54516"/>
<dbReference type="Antibodypedia" id="18333">
    <property type="antibodies" value="138 antibodies from 22 providers"/>
</dbReference>
<dbReference type="DNASU" id="5775"/>
<dbReference type="Ensembl" id="ENST00000263708.7">
    <property type="protein sequence ID" value="ENSP00000263708.2"/>
    <property type="gene ID" value="ENSG00000088179.9"/>
</dbReference>
<dbReference type="GeneID" id="5775"/>
<dbReference type="KEGG" id="hsa:5775"/>
<dbReference type="MANE-Select" id="ENST00000263708.7">
    <property type="protein sequence ID" value="ENSP00000263708.2"/>
    <property type="RefSeq nucleotide sequence ID" value="NM_002830.4"/>
    <property type="RefSeq protein sequence ID" value="NP_002821.1"/>
</dbReference>
<dbReference type="UCSC" id="uc002tmf.3">
    <property type="organism name" value="human"/>
</dbReference>
<dbReference type="AGR" id="HGNC:9656"/>
<dbReference type="CTD" id="5775"/>
<dbReference type="DisGeNET" id="5775"/>
<dbReference type="GeneCards" id="PTPN4"/>
<dbReference type="HGNC" id="HGNC:9656">
    <property type="gene designation" value="PTPN4"/>
</dbReference>
<dbReference type="HPA" id="ENSG00000088179">
    <property type="expression patterns" value="Low tissue specificity"/>
</dbReference>
<dbReference type="MIM" id="176878">
    <property type="type" value="gene"/>
</dbReference>
<dbReference type="neXtProt" id="NX_P29074"/>
<dbReference type="OpenTargets" id="ENSG00000088179"/>
<dbReference type="PharmGKB" id="PA34000"/>
<dbReference type="VEuPathDB" id="HostDB:ENSG00000088179"/>
<dbReference type="eggNOG" id="KOG0792">
    <property type="taxonomic scope" value="Eukaryota"/>
</dbReference>
<dbReference type="GeneTree" id="ENSGT00940000157211"/>
<dbReference type="HOGENOM" id="CLU_001645_7_0_1"/>
<dbReference type="InParanoid" id="P29074"/>
<dbReference type="OMA" id="MIRECRH"/>
<dbReference type="OrthoDB" id="5854685at2759"/>
<dbReference type="PAN-GO" id="P29074">
    <property type="GO annotations" value="3 GO annotations based on evolutionary models"/>
</dbReference>
<dbReference type="PhylomeDB" id="P29074"/>
<dbReference type="TreeFam" id="TF315900"/>
<dbReference type="BRENDA" id="3.1.3.48">
    <property type="organism ID" value="2681"/>
</dbReference>
<dbReference type="PathwayCommons" id="P29074"/>
<dbReference type="Reactome" id="R-HSA-166016">
    <property type="pathway name" value="Toll Like Receptor 4 (TLR4) Cascade"/>
</dbReference>
<dbReference type="Reactome" id="R-HSA-9008059">
    <property type="pathway name" value="Interleukin-37 signaling"/>
</dbReference>
<dbReference type="Reactome" id="R-HSA-9022699">
    <property type="pathway name" value="MECP2 regulates neuronal receptors and channels"/>
</dbReference>
<dbReference type="SignaLink" id="P29074"/>
<dbReference type="SIGNOR" id="P29074"/>
<dbReference type="BioGRID-ORCS" id="5775">
    <property type="hits" value="16 hits in 1175 CRISPR screens"/>
</dbReference>
<dbReference type="ChiTaRS" id="PTPN4">
    <property type="organism name" value="human"/>
</dbReference>
<dbReference type="EvolutionaryTrace" id="P29074"/>
<dbReference type="GeneWiki" id="PTPN4"/>
<dbReference type="GenomeRNAi" id="5775"/>
<dbReference type="Pharos" id="P29074">
    <property type="development level" value="Tchem"/>
</dbReference>
<dbReference type="PRO" id="PR:P29074"/>
<dbReference type="Proteomes" id="UP000005640">
    <property type="component" value="Chromosome 2"/>
</dbReference>
<dbReference type="RNAct" id="P29074">
    <property type="molecule type" value="protein"/>
</dbReference>
<dbReference type="Bgee" id="ENSG00000088179">
    <property type="expression patterns" value="Expressed in lateral nuclear group of thalamus and 191 other cell types or tissues"/>
</dbReference>
<dbReference type="ExpressionAtlas" id="P29074">
    <property type="expression patterns" value="baseline and differential"/>
</dbReference>
<dbReference type="GO" id="GO:0005737">
    <property type="term" value="C:cytoplasm"/>
    <property type="evidence" value="ECO:0000314"/>
    <property type="project" value="UniProtKB"/>
</dbReference>
<dbReference type="GO" id="GO:0009898">
    <property type="term" value="C:cytoplasmic side of plasma membrane"/>
    <property type="evidence" value="ECO:0000314"/>
    <property type="project" value="UniProtKB"/>
</dbReference>
<dbReference type="GO" id="GO:0005856">
    <property type="term" value="C:cytoskeleton"/>
    <property type="evidence" value="ECO:0007669"/>
    <property type="project" value="UniProtKB-SubCell"/>
</dbReference>
<dbReference type="GO" id="GO:0005829">
    <property type="term" value="C:cytosol"/>
    <property type="evidence" value="ECO:0000304"/>
    <property type="project" value="Reactome"/>
</dbReference>
<dbReference type="GO" id="GO:0005654">
    <property type="term" value="C:nucleoplasm"/>
    <property type="evidence" value="ECO:0000304"/>
    <property type="project" value="Reactome"/>
</dbReference>
<dbReference type="GO" id="GO:0008092">
    <property type="term" value="F:cytoskeletal protein binding"/>
    <property type="evidence" value="ECO:0007669"/>
    <property type="project" value="InterPro"/>
</dbReference>
<dbReference type="GO" id="GO:0035254">
    <property type="term" value="F:glutamate receptor binding"/>
    <property type="evidence" value="ECO:0007669"/>
    <property type="project" value="Ensembl"/>
</dbReference>
<dbReference type="GO" id="GO:0004726">
    <property type="term" value="F:non-membrane spanning protein tyrosine phosphatase activity"/>
    <property type="evidence" value="ECO:0000304"/>
    <property type="project" value="ProtInc"/>
</dbReference>
<dbReference type="GO" id="GO:0004725">
    <property type="term" value="F:protein tyrosine phosphatase activity"/>
    <property type="evidence" value="ECO:0000318"/>
    <property type="project" value="GO_Central"/>
</dbReference>
<dbReference type="GO" id="GO:0006470">
    <property type="term" value="P:protein dephosphorylation"/>
    <property type="evidence" value="ECO:0000304"/>
    <property type="project" value="ProtInc"/>
</dbReference>
<dbReference type="CDD" id="cd14473">
    <property type="entry name" value="FERM_B-lobe"/>
    <property type="match status" value="1"/>
</dbReference>
<dbReference type="CDD" id="cd13189">
    <property type="entry name" value="FERM_C_PTPN4_PTPN3_like"/>
    <property type="match status" value="1"/>
</dbReference>
<dbReference type="CDD" id="cd17194">
    <property type="entry name" value="FERM_F1_PTPN4"/>
    <property type="match status" value="1"/>
</dbReference>
<dbReference type="CDD" id="cd06706">
    <property type="entry name" value="PDZ_PTPN3-4-like"/>
    <property type="match status" value="1"/>
</dbReference>
<dbReference type="FunFam" id="2.30.29.30:FF:000002">
    <property type="entry name" value="Band 4.1-like protein 5 isoform 1"/>
    <property type="match status" value="1"/>
</dbReference>
<dbReference type="FunFam" id="2.30.42.10:FF:000045">
    <property type="entry name" value="Tyrosine-protein phosphatase non-receptor type"/>
    <property type="match status" value="1"/>
</dbReference>
<dbReference type="FunFam" id="3.10.20.90:FF:000104">
    <property type="entry name" value="Tyrosine-protein phosphatase non-receptor type"/>
    <property type="match status" value="1"/>
</dbReference>
<dbReference type="FunFam" id="3.90.190.10:FF:000023">
    <property type="entry name" value="Tyrosine-protein phosphatase non-receptor type"/>
    <property type="match status" value="1"/>
</dbReference>
<dbReference type="FunFam" id="1.20.80.10:FF:000003">
    <property type="entry name" value="Tyrosine-protein phosphatase non-receptor type 4"/>
    <property type="match status" value="1"/>
</dbReference>
<dbReference type="Gene3D" id="1.20.80.10">
    <property type="match status" value="1"/>
</dbReference>
<dbReference type="Gene3D" id="2.30.42.10">
    <property type="match status" value="1"/>
</dbReference>
<dbReference type="Gene3D" id="3.10.20.90">
    <property type="entry name" value="Phosphatidylinositol 3-kinase Catalytic Subunit, Chain A, domain 1"/>
    <property type="match status" value="1"/>
</dbReference>
<dbReference type="Gene3D" id="2.30.29.30">
    <property type="entry name" value="Pleckstrin-homology domain (PH domain)/Phosphotyrosine-binding domain (PTB)"/>
    <property type="match status" value="1"/>
</dbReference>
<dbReference type="Gene3D" id="3.90.190.10">
    <property type="entry name" value="Protein tyrosine phosphatase superfamily"/>
    <property type="match status" value="1"/>
</dbReference>
<dbReference type="IDEAL" id="IID00656"/>
<dbReference type="InterPro" id="IPR019749">
    <property type="entry name" value="Band_41_domain"/>
</dbReference>
<dbReference type="InterPro" id="IPR014847">
    <property type="entry name" value="FA"/>
</dbReference>
<dbReference type="InterPro" id="IPR014352">
    <property type="entry name" value="FERM/acyl-CoA-bd_prot_sf"/>
</dbReference>
<dbReference type="InterPro" id="IPR035963">
    <property type="entry name" value="FERM_2"/>
</dbReference>
<dbReference type="InterPro" id="IPR019748">
    <property type="entry name" value="FERM_central"/>
</dbReference>
<dbReference type="InterPro" id="IPR019747">
    <property type="entry name" value="FERM_CS"/>
</dbReference>
<dbReference type="InterPro" id="IPR000299">
    <property type="entry name" value="FERM_domain"/>
</dbReference>
<dbReference type="InterPro" id="IPR018979">
    <property type="entry name" value="FERM_N"/>
</dbReference>
<dbReference type="InterPro" id="IPR018980">
    <property type="entry name" value="FERM_PH-like_C"/>
</dbReference>
<dbReference type="InterPro" id="IPR001478">
    <property type="entry name" value="PDZ"/>
</dbReference>
<dbReference type="InterPro" id="IPR036034">
    <property type="entry name" value="PDZ_sf"/>
</dbReference>
<dbReference type="InterPro" id="IPR011993">
    <property type="entry name" value="PH-like_dom_sf"/>
</dbReference>
<dbReference type="InterPro" id="IPR029021">
    <property type="entry name" value="Prot-tyrosine_phosphatase-like"/>
</dbReference>
<dbReference type="InterPro" id="IPR000242">
    <property type="entry name" value="PTP_cat"/>
</dbReference>
<dbReference type="InterPro" id="IPR041783">
    <property type="entry name" value="PTPN3/4_FERM_C"/>
</dbReference>
<dbReference type="InterPro" id="IPR016130">
    <property type="entry name" value="Tyr_Pase_AS"/>
</dbReference>
<dbReference type="InterPro" id="IPR003595">
    <property type="entry name" value="Tyr_Pase_cat"/>
</dbReference>
<dbReference type="InterPro" id="IPR000387">
    <property type="entry name" value="Tyr_Pase_dom"/>
</dbReference>
<dbReference type="InterPro" id="IPR012151">
    <property type="entry name" value="Tyr_Pase_non-rcpt_typ-3/4"/>
</dbReference>
<dbReference type="InterPro" id="IPR029071">
    <property type="entry name" value="Ubiquitin-like_domsf"/>
</dbReference>
<dbReference type="PANTHER" id="PTHR45706">
    <property type="entry name" value="TYROSINE-PROTEIN PHOSPHATASE"/>
    <property type="match status" value="1"/>
</dbReference>
<dbReference type="PANTHER" id="PTHR45706:SF7">
    <property type="entry name" value="TYROSINE-PROTEIN PHOSPHATASE NON-RECEPTOR TYPE 4"/>
    <property type="match status" value="1"/>
</dbReference>
<dbReference type="Pfam" id="PF08736">
    <property type="entry name" value="FA"/>
    <property type="match status" value="1"/>
</dbReference>
<dbReference type="Pfam" id="PF09380">
    <property type="entry name" value="FERM_C"/>
    <property type="match status" value="1"/>
</dbReference>
<dbReference type="Pfam" id="PF00373">
    <property type="entry name" value="FERM_M"/>
    <property type="match status" value="1"/>
</dbReference>
<dbReference type="Pfam" id="PF09379">
    <property type="entry name" value="FERM_N"/>
    <property type="match status" value="1"/>
</dbReference>
<dbReference type="Pfam" id="PF00595">
    <property type="entry name" value="PDZ"/>
    <property type="match status" value="1"/>
</dbReference>
<dbReference type="Pfam" id="PF00102">
    <property type="entry name" value="Y_phosphatase"/>
    <property type="match status" value="1"/>
</dbReference>
<dbReference type="PIRSF" id="PIRSF000927">
    <property type="entry name" value="Tyr-Ptase_nr3"/>
    <property type="match status" value="1"/>
</dbReference>
<dbReference type="PRINTS" id="PR00935">
    <property type="entry name" value="BAND41"/>
</dbReference>
<dbReference type="PRINTS" id="PR00700">
    <property type="entry name" value="PRTYPHPHTASE"/>
</dbReference>
<dbReference type="SMART" id="SM00295">
    <property type="entry name" value="B41"/>
    <property type="match status" value="1"/>
</dbReference>
<dbReference type="SMART" id="SM01195">
    <property type="entry name" value="FA"/>
    <property type="match status" value="1"/>
</dbReference>
<dbReference type="SMART" id="SM01196">
    <property type="entry name" value="FERM_C"/>
    <property type="match status" value="1"/>
</dbReference>
<dbReference type="SMART" id="SM00228">
    <property type="entry name" value="PDZ"/>
    <property type="match status" value="1"/>
</dbReference>
<dbReference type="SMART" id="SM00194">
    <property type="entry name" value="PTPc"/>
    <property type="match status" value="1"/>
</dbReference>
<dbReference type="SMART" id="SM00404">
    <property type="entry name" value="PTPc_motif"/>
    <property type="match status" value="1"/>
</dbReference>
<dbReference type="SUPFAM" id="SSF52799">
    <property type="entry name" value="(Phosphotyrosine protein) phosphatases II"/>
    <property type="match status" value="1"/>
</dbReference>
<dbReference type="SUPFAM" id="SSF50156">
    <property type="entry name" value="PDZ domain-like"/>
    <property type="match status" value="1"/>
</dbReference>
<dbReference type="SUPFAM" id="SSF50729">
    <property type="entry name" value="PH domain-like"/>
    <property type="match status" value="1"/>
</dbReference>
<dbReference type="SUPFAM" id="SSF47031">
    <property type="entry name" value="Second domain of FERM"/>
    <property type="match status" value="1"/>
</dbReference>
<dbReference type="SUPFAM" id="SSF54236">
    <property type="entry name" value="Ubiquitin-like"/>
    <property type="match status" value="1"/>
</dbReference>
<dbReference type="PROSITE" id="PS00660">
    <property type="entry name" value="FERM_1"/>
    <property type="match status" value="1"/>
</dbReference>
<dbReference type="PROSITE" id="PS00661">
    <property type="entry name" value="FERM_2"/>
    <property type="match status" value="1"/>
</dbReference>
<dbReference type="PROSITE" id="PS50057">
    <property type="entry name" value="FERM_3"/>
    <property type="match status" value="1"/>
</dbReference>
<dbReference type="PROSITE" id="PS50106">
    <property type="entry name" value="PDZ"/>
    <property type="match status" value="1"/>
</dbReference>
<dbReference type="PROSITE" id="PS00383">
    <property type="entry name" value="TYR_PHOSPHATASE_1"/>
    <property type="match status" value="1"/>
</dbReference>
<dbReference type="PROSITE" id="PS50056">
    <property type="entry name" value="TYR_PHOSPHATASE_2"/>
    <property type="match status" value="1"/>
</dbReference>
<dbReference type="PROSITE" id="PS50055">
    <property type="entry name" value="TYR_PHOSPHATASE_PTP"/>
    <property type="match status" value="1"/>
</dbReference>
<proteinExistence type="evidence at protein level"/>
<evidence type="ECO:0000250" key="1"/>
<evidence type="ECO:0000250" key="2">
    <source>
        <dbReference type="UniProtKB" id="Q9WU22"/>
    </source>
</evidence>
<evidence type="ECO:0000255" key="3">
    <source>
        <dbReference type="PROSITE-ProRule" id="PRU00084"/>
    </source>
</evidence>
<evidence type="ECO:0000255" key="4">
    <source>
        <dbReference type="PROSITE-ProRule" id="PRU00143"/>
    </source>
</evidence>
<evidence type="ECO:0000255" key="5">
    <source>
        <dbReference type="PROSITE-ProRule" id="PRU00160"/>
    </source>
</evidence>
<evidence type="ECO:0000255" key="6">
    <source>
        <dbReference type="PROSITE-ProRule" id="PRU10044"/>
    </source>
</evidence>
<evidence type="ECO:0000256" key="7">
    <source>
        <dbReference type="SAM" id="MobiDB-lite"/>
    </source>
</evidence>
<evidence type="ECO:0000269" key="8">
    <source>
    </source>
</evidence>
<evidence type="ECO:0000269" key="9">
    <source>
    </source>
</evidence>
<evidence type="ECO:0000269" key="10">
    <source>
    </source>
</evidence>
<evidence type="ECO:0000269" key="11">
    <source>
    </source>
</evidence>
<evidence type="ECO:0000305" key="12"/>
<evidence type="ECO:0007829" key="13">
    <source>
        <dbReference type="PDB" id="2CS5"/>
    </source>
</evidence>
<evidence type="ECO:0007829" key="14">
    <source>
        <dbReference type="PDB" id="2I75"/>
    </source>
</evidence>
<evidence type="ECO:0007829" key="15">
    <source>
        <dbReference type="PDB" id="2VPH"/>
    </source>
</evidence>
<evidence type="ECO:0007829" key="16">
    <source>
        <dbReference type="PDB" id="3NFK"/>
    </source>
</evidence>
<evidence type="ECO:0007829" key="17">
    <source>
        <dbReference type="PDB" id="7VZE"/>
    </source>
</evidence>
<name>PTN4_HUMAN</name>
<comment type="function">
    <text evidence="1 2 8 9 10">Phosphatase that plays a role in immunity, learning, synaptic plasticity or cell homeostasis (PubMed:25825441, PubMed:27246854). Regulates neuronal cell homeostasis by protecting neurons against apoptosis (PubMed:20086240). Negatively regulates TLR4-induced interferon beta production by dephosphorylating adapter TICAM2 and inhibiting subsequent TRAM-TRIF interaction (PubMed:25825441). Also dephosphorylates the immunoreceptor tyrosine-based activation motifs/ITAMs of the TCR zeta subunit and thereby negatively regulates TCR-mediated signaling pathway (By similarity). May act at junctions between the membrane and the cytoskeleton.</text>
</comment>
<comment type="catalytic activity">
    <reaction evidence="6">
        <text>O-phospho-L-tyrosyl-[protein] + H2O = L-tyrosyl-[protein] + phosphate</text>
        <dbReference type="Rhea" id="RHEA:10684"/>
        <dbReference type="Rhea" id="RHEA-COMP:10136"/>
        <dbReference type="Rhea" id="RHEA-COMP:20101"/>
        <dbReference type="ChEBI" id="CHEBI:15377"/>
        <dbReference type="ChEBI" id="CHEBI:43474"/>
        <dbReference type="ChEBI" id="CHEBI:46858"/>
        <dbReference type="ChEBI" id="CHEBI:61978"/>
        <dbReference type="EC" id="3.1.3.48"/>
    </reaction>
</comment>
<comment type="subunit">
    <text evidence="10">Interacts with MAPK12 (via C-terminus); this interaction abolishes PTPN4 catalytic autoinhibition and thus activates the phosphatase activity.</text>
</comment>
<comment type="subunit">
    <text evidence="8">(Microbial infection) Interacts with attenuated rabies virus protein G; this interaction is required for virally-induced apoptosis.</text>
</comment>
<comment type="interaction">
    <interactant intactId="EBI-710431">
        <id>P29074</id>
    </interactant>
    <interactant intactId="EBI-718729">
        <id>P55212</id>
        <label>CASP6</label>
    </interactant>
    <organismsDiffer>false</organismsDiffer>
    <experiments>3</experiments>
</comment>
<comment type="interaction">
    <interactant intactId="EBI-710431">
        <id>P29074</id>
    </interactant>
    <interactant intactId="EBI-6624398">
        <id>P06307</id>
        <label>CCK</label>
    </interactant>
    <organismsDiffer>false</organismsDiffer>
    <experiments>3</experiments>
</comment>
<comment type="interaction">
    <interactant intactId="EBI-710431">
        <id>P29074</id>
    </interactant>
    <interactant intactId="EBI-886">
        <id>P46108</id>
        <label>CRK</label>
    </interactant>
    <organismsDiffer>false</organismsDiffer>
    <experiments>3</experiments>
</comment>
<comment type="interaction">
    <interactant intactId="EBI-710431">
        <id>P29074</id>
    </interactant>
    <interactant intactId="EBI-399080">
        <id>Q92993</id>
        <label>KAT5</label>
    </interactant>
    <organismsDiffer>false</organismsDiffer>
    <experiments>2</experiments>
</comment>
<comment type="interaction">
    <interactant intactId="EBI-710431">
        <id>P29074</id>
    </interactant>
    <interactant intactId="EBI-21591415">
        <id>P13473-2</id>
        <label>LAMP2</label>
    </interactant>
    <organismsDiffer>false</organismsDiffer>
    <experiments>3</experiments>
</comment>
<comment type="interaction">
    <interactant intactId="EBI-710431">
        <id>P29074</id>
    </interactant>
    <interactant intactId="EBI-602406">
        <id>P53778</id>
        <label>MAPK12</label>
    </interactant>
    <organismsDiffer>false</organismsDiffer>
    <experiments>2</experiments>
</comment>
<comment type="interaction">
    <interactant intactId="EBI-710431">
        <id>P29074</id>
    </interactant>
    <interactant intactId="EBI-389883">
        <id>P16333</id>
        <label>NCK1</label>
    </interactant>
    <organismsDiffer>false</organismsDiffer>
    <experiments>3</experiments>
</comment>
<comment type="interaction">
    <interactant intactId="EBI-710431">
        <id>P29074</id>
    </interactant>
    <interactant intactId="EBI-5280197">
        <id>O75400-2</id>
        <label>PRPF40A</label>
    </interactant>
    <organismsDiffer>false</organismsDiffer>
    <experiments>3</experiments>
</comment>
<comment type="subcellular location">
    <subcellularLocation>
        <location evidence="11">Cell membrane</location>
        <topology evidence="1">Peripheral membrane protein</topology>
        <orientation evidence="1">Cytoplasmic side</orientation>
    </subcellularLocation>
    <subcellularLocation>
        <location evidence="11">Cytoplasm</location>
        <location evidence="11">Cytoskeleton</location>
    </subcellularLocation>
    <subcellularLocation>
        <location evidence="8 11">Cytoplasm</location>
    </subcellularLocation>
</comment>
<comment type="PTM">
    <text evidence="11">Highly phosphorylated on serine and threonine residues but not on tyrosines.</text>
</comment>
<comment type="PTM">
    <text evidence="11">Cleaved and activated by calpain I/CAPN1.</text>
</comment>
<comment type="similarity">
    <text evidence="12">Belongs to the protein-tyrosine phosphatase family. Non-receptor class subfamily.</text>
</comment>
<keyword id="KW-0002">3D-structure</keyword>
<keyword id="KW-1003">Cell membrane</keyword>
<keyword id="KW-0963">Cytoplasm</keyword>
<keyword id="KW-0206">Cytoskeleton</keyword>
<keyword id="KW-0378">Hydrolase</keyword>
<keyword id="KW-0472">Membrane</keyword>
<keyword id="KW-0597">Phosphoprotein</keyword>
<keyword id="KW-0904">Protein phosphatase</keyword>
<keyword id="KW-1267">Proteomics identification</keyword>
<keyword id="KW-1185">Reference proteome</keyword>
<sequence length="926" mass="105911">MTSRFRLPAGRTYNVRASELARDRQHTEVVCNILLLDNTVQAFKVNKHDQGQVLLDVVFKHLDLTEQDYFGLQLADDSTDNPRWLDPNKPIRKQLKRGSPYSLNFRVKFFVSDPNKLQEEYTRYQYFLQIKQDILTGRLPCPSNTAALLASFAVQSELGDYDQSENLSGYLSDYSFIPNQPQDFEKEIAKLHQQHIGLSPAEAEFNYLNTARTLELYGVEFHYARDQSNNEIMIGVMSGGILIYKNRVRMNTFPWLKIVKISFKCKQFFIQLRKELHESRETLLGFNMVNYRACKNLWKACVEHHTFFRLDRPLPPQKNFFAHYFTLGSKFRYCGRTEVQSVQYGKEKANKDRVFARSPSKPLARKLMDWEVVSRNSISDDRLETQSLPSRSPPGTPNHRNSTFTQEGTRLRPSSVGHLVDHMVHTSPSEVFVNQRSPSSTQANSIVLESSPSQETPGDGKPPALPPKQSKKNSWNQIHYSHSQQDLESHINETFDIPSSPEKPTPNGGIPHDNLVLIRMKPDENGRFGFNVKGGYDQKMPVIVSRVAPGTPADLCVPRLNEGDQVVLINGRDIAEHTHDQVVLFIKASCERHSGELMLLVRPNAVYDVVEEKLENEPDFQYIPEKAPLDSVHQDDHSLRESMIQLAEGLITGTVLTQFDQLYRKKPGMTMSCAKLPQNISKNRYRDISPYDATRVILKGNEDYINANYINMEIPSSSIINQYIACQGPLPHTCTDFWQMTWEQGSSMVVMLTTQVERGRVKCHQYWPEPTGSSSYGCYQVTCHSEEGNTAYIFRKMTLFNQEKNESRPLTQIQYIAWPDHGVPDDSSDFLDFVCHVRNKRAGKEEPVVVHCSAGIGRTGVLITMETAMCLIECNQPVYPLDIVRTMRDQRAMMIQTPSQYRFVCEAILKVYEEGFVKPLTTSTNK</sequence>
<organism>
    <name type="scientific">Homo sapiens</name>
    <name type="common">Human</name>
    <dbReference type="NCBI Taxonomy" id="9606"/>
    <lineage>
        <taxon>Eukaryota</taxon>
        <taxon>Metazoa</taxon>
        <taxon>Chordata</taxon>
        <taxon>Craniata</taxon>
        <taxon>Vertebrata</taxon>
        <taxon>Euteleostomi</taxon>
        <taxon>Mammalia</taxon>
        <taxon>Eutheria</taxon>
        <taxon>Euarchontoglires</taxon>
        <taxon>Primates</taxon>
        <taxon>Haplorrhini</taxon>
        <taxon>Catarrhini</taxon>
        <taxon>Hominidae</taxon>
        <taxon>Homo</taxon>
    </lineage>
</organism>
<gene>
    <name type="primary">PTPN4</name>
</gene>
<accession>P29074</accession>
<accession>B2RBV8</accession>
<accession>Q9UDA7</accession>
<protein>
    <recommendedName>
        <fullName>Tyrosine-protein phosphatase non-receptor type 4</fullName>
        <ecNumber>3.1.3.48</ecNumber>
    </recommendedName>
    <alternativeName>
        <fullName>Protein-tyrosine phosphatase MEG1</fullName>
        <shortName>MEG</shortName>
        <shortName>PTPase-MEG1</shortName>
    </alternativeName>
</protein>
<reference key="1">
    <citation type="journal article" date="1991" name="Proc. Natl. Acad. Sci. U.S.A.">
        <title>Identification, cloning, and expression of a cytosolic megakaryocyte protein-tyrosine-phosphatase with sequence homology to cytoskeletal protein 4.1.</title>
        <authorList>
            <person name="Gu M."/>
            <person name="York J.D."/>
            <person name="Warshawsky I."/>
            <person name="Majerus P.W."/>
        </authorList>
    </citation>
    <scope>NUCLEOTIDE SEQUENCE [MRNA]</scope>
</reference>
<reference key="2">
    <citation type="journal article" date="2004" name="Nat. Genet.">
        <title>Complete sequencing and characterization of 21,243 full-length human cDNAs.</title>
        <authorList>
            <person name="Ota T."/>
            <person name="Suzuki Y."/>
            <person name="Nishikawa T."/>
            <person name="Otsuki T."/>
            <person name="Sugiyama T."/>
            <person name="Irie R."/>
            <person name="Wakamatsu A."/>
            <person name="Hayashi K."/>
            <person name="Sato H."/>
            <person name="Nagai K."/>
            <person name="Kimura K."/>
            <person name="Makita H."/>
            <person name="Sekine M."/>
            <person name="Obayashi M."/>
            <person name="Nishi T."/>
            <person name="Shibahara T."/>
            <person name="Tanaka T."/>
            <person name="Ishii S."/>
            <person name="Yamamoto J."/>
            <person name="Saito K."/>
            <person name="Kawai Y."/>
            <person name="Isono Y."/>
            <person name="Nakamura Y."/>
            <person name="Nagahari K."/>
            <person name="Murakami K."/>
            <person name="Yasuda T."/>
            <person name="Iwayanagi T."/>
            <person name="Wagatsuma M."/>
            <person name="Shiratori A."/>
            <person name="Sudo H."/>
            <person name="Hosoiri T."/>
            <person name="Kaku Y."/>
            <person name="Kodaira H."/>
            <person name="Kondo H."/>
            <person name="Sugawara M."/>
            <person name="Takahashi M."/>
            <person name="Kanda K."/>
            <person name="Yokoi T."/>
            <person name="Furuya T."/>
            <person name="Kikkawa E."/>
            <person name="Omura Y."/>
            <person name="Abe K."/>
            <person name="Kamihara K."/>
            <person name="Katsuta N."/>
            <person name="Sato K."/>
            <person name="Tanikawa M."/>
            <person name="Yamazaki M."/>
            <person name="Ninomiya K."/>
            <person name="Ishibashi T."/>
            <person name="Yamashita H."/>
            <person name="Murakawa K."/>
            <person name="Fujimori K."/>
            <person name="Tanai H."/>
            <person name="Kimata M."/>
            <person name="Watanabe M."/>
            <person name="Hiraoka S."/>
            <person name="Chiba Y."/>
            <person name="Ishida S."/>
            <person name="Ono Y."/>
            <person name="Takiguchi S."/>
            <person name="Watanabe S."/>
            <person name="Yosida M."/>
            <person name="Hotuta T."/>
            <person name="Kusano J."/>
            <person name="Kanehori K."/>
            <person name="Takahashi-Fujii A."/>
            <person name="Hara H."/>
            <person name="Tanase T.-O."/>
            <person name="Nomura Y."/>
            <person name="Togiya S."/>
            <person name="Komai F."/>
            <person name="Hara R."/>
            <person name="Takeuchi K."/>
            <person name="Arita M."/>
            <person name="Imose N."/>
            <person name="Musashino K."/>
            <person name="Yuuki H."/>
            <person name="Oshima A."/>
            <person name="Sasaki N."/>
            <person name="Aotsuka S."/>
            <person name="Yoshikawa Y."/>
            <person name="Matsunawa H."/>
            <person name="Ichihara T."/>
            <person name="Shiohata N."/>
            <person name="Sano S."/>
            <person name="Moriya S."/>
            <person name="Momiyama H."/>
            <person name="Satoh N."/>
            <person name="Takami S."/>
            <person name="Terashima Y."/>
            <person name="Suzuki O."/>
            <person name="Nakagawa S."/>
            <person name="Senoh A."/>
            <person name="Mizoguchi H."/>
            <person name="Goto Y."/>
            <person name="Shimizu F."/>
            <person name="Wakebe H."/>
            <person name="Hishigaki H."/>
            <person name="Watanabe T."/>
            <person name="Sugiyama A."/>
            <person name="Takemoto M."/>
            <person name="Kawakami B."/>
            <person name="Yamazaki M."/>
            <person name="Watanabe K."/>
            <person name="Kumagai A."/>
            <person name="Itakura S."/>
            <person name="Fukuzumi Y."/>
            <person name="Fujimori Y."/>
            <person name="Komiyama M."/>
            <person name="Tashiro H."/>
            <person name="Tanigami A."/>
            <person name="Fujiwara T."/>
            <person name="Ono T."/>
            <person name="Yamada K."/>
            <person name="Fujii Y."/>
            <person name="Ozaki K."/>
            <person name="Hirao M."/>
            <person name="Ohmori Y."/>
            <person name="Kawabata A."/>
            <person name="Hikiji T."/>
            <person name="Kobatake N."/>
            <person name="Inagaki H."/>
            <person name="Ikema Y."/>
            <person name="Okamoto S."/>
            <person name="Okitani R."/>
            <person name="Kawakami T."/>
            <person name="Noguchi S."/>
            <person name="Itoh T."/>
            <person name="Shigeta K."/>
            <person name="Senba T."/>
            <person name="Matsumura K."/>
            <person name="Nakajima Y."/>
            <person name="Mizuno T."/>
            <person name="Morinaga M."/>
            <person name="Sasaki M."/>
            <person name="Togashi T."/>
            <person name="Oyama M."/>
            <person name="Hata H."/>
            <person name="Watanabe M."/>
            <person name="Komatsu T."/>
            <person name="Mizushima-Sugano J."/>
            <person name="Satoh T."/>
            <person name="Shirai Y."/>
            <person name="Takahashi Y."/>
            <person name="Nakagawa K."/>
            <person name="Okumura K."/>
            <person name="Nagase T."/>
            <person name="Nomura N."/>
            <person name="Kikuchi H."/>
            <person name="Masuho Y."/>
            <person name="Yamashita R."/>
            <person name="Nakai K."/>
            <person name="Yada T."/>
            <person name="Nakamura Y."/>
            <person name="Ohara O."/>
            <person name="Isogai T."/>
            <person name="Sugano S."/>
        </authorList>
    </citation>
    <scope>NUCLEOTIDE SEQUENCE [LARGE SCALE MRNA]</scope>
    <source>
        <tissue>Brain</tissue>
    </source>
</reference>
<reference key="3">
    <citation type="journal article" date="2004" name="Genome Res.">
        <title>The status, quality, and expansion of the NIH full-length cDNA project: the Mammalian Gene Collection (MGC).</title>
        <authorList>
            <consortium name="The MGC Project Team"/>
        </authorList>
    </citation>
    <scope>NUCLEOTIDE SEQUENCE [LARGE SCALE MRNA]</scope>
    <source>
        <tissue>Colon</tissue>
    </source>
</reference>
<reference key="4">
    <citation type="journal article" date="1993" name="Leukemia">
        <title>Identification of novel protein-tyrosine phosphatases in a human leukemia cell line, F-36P.</title>
        <authorList>
            <person name="Honda H."/>
            <person name="Shibuya M."/>
            <person name="Chiba S."/>
            <person name="Yazaki Y."/>
            <person name="Hirai H."/>
        </authorList>
    </citation>
    <scope>NUCLEOTIDE SEQUENCE [MRNA] OF 745-858</scope>
    <source>
        <tissue>Leukemia</tissue>
    </source>
</reference>
<reference key="5">
    <citation type="journal article" date="1996" name="J. Biol. Chem.">
        <title>The properties of the protein tyrosine phosphatase PTPMEG.</title>
        <authorList>
            <person name="Gu M."/>
            <person name="Majerus P.W."/>
        </authorList>
    </citation>
    <scope>SUBCELLULAR LOCATION</scope>
    <scope>PHOSPHORYLATION</scope>
    <scope>CLEAVAGE</scope>
</reference>
<reference key="6">
    <citation type="journal article" date="2015" name="J. Immunol.">
        <title>Phosphatase PTPN4 preferentially inhibits TRIF-dependent TLR4 pathway by dephosphorylating TRAM.</title>
        <authorList>
            <person name="Huai W."/>
            <person name="Song H."/>
            <person name="Wang L."/>
            <person name="Li B."/>
            <person name="Zhao J."/>
            <person name="Han L."/>
            <person name="Gao C."/>
            <person name="Jiang G."/>
            <person name="Zhang L."/>
            <person name="Zhao W."/>
        </authorList>
    </citation>
    <scope>FUNCTION</scope>
</reference>
<reference key="7">
    <citation type="submission" date="2005-11" db="PDB data bank">
        <title>Solution structure of PDZ domain of protein tyrosine phosphatase, non-receptor type 4.</title>
        <authorList>
            <consortium name="RIKEN structural genomics initiative (RSGI)"/>
        </authorList>
    </citation>
    <scope>STRUCTURE BY NMR OF 507-612</scope>
</reference>
<reference key="8">
    <citation type="journal article" date="2010" name="Sci. Signal.">
        <title>Attenuation of rabies virulence: takeover by the cytoplasmic domain of its envelope protein.</title>
        <authorList>
            <person name="Prehaud C."/>
            <person name="Wolff N."/>
            <person name="Terrien E."/>
            <person name="Lafage M."/>
            <person name="Megret F."/>
            <person name="Babault N."/>
            <person name="Cordier F."/>
            <person name="Tan G.S."/>
            <person name="Maitrepierre E."/>
            <person name="Menager P."/>
            <person name="Chopy D."/>
            <person name="Hoos S."/>
            <person name="England P."/>
            <person name="Delepierre M."/>
            <person name="Schnell M.J."/>
            <person name="Buc H."/>
            <person name="Lafon M."/>
        </authorList>
    </citation>
    <scope>FUNCTION</scope>
    <scope>SUBCELLULAR LOCATION</scope>
    <scope>INTERACTION WITH ATTENUATED RABIES VIRUS PROTEIN G (MICROBIAL INFECTION)</scope>
</reference>
<reference key="9">
    <citation type="journal article" date="2016" name="J. Biol. Chem.">
        <title>Molecular Basis of the Interaction of the Human Protein Tyrosine Phosphatase Non-receptor Type 4 (PTPN4) with the Mitogen-activated Protein Kinase p38gamma.</title>
        <authorList>
            <person name="Maisonneuve P."/>
            <person name="Caillet-Saguy C."/>
            <person name="Vaney M.C."/>
            <person name="Bibi-Zainab E."/>
            <person name="Sawyer K."/>
            <person name="Raynal B."/>
            <person name="Haouz A."/>
            <person name="Delepierre M."/>
            <person name="Lafon M."/>
            <person name="Cordier F."/>
            <person name="Wolff N."/>
        </authorList>
    </citation>
    <scope>X-RAY CRYSTALLOGRAPHY (2.09 ANGSTROMS) OF 499-604</scope>
    <scope>INTERACTION WITH MAPK12</scope>
    <scope>FUNCTION</scope>
</reference>
<feature type="chain" id="PRO_0000219434" description="Tyrosine-protein phosphatase non-receptor type 4">
    <location>
        <begin position="1"/>
        <end position="926"/>
    </location>
</feature>
<feature type="domain" description="FERM" evidence="3">
    <location>
        <begin position="29"/>
        <end position="312"/>
    </location>
</feature>
<feature type="domain" description="PDZ" evidence="4">
    <location>
        <begin position="517"/>
        <end position="589"/>
    </location>
</feature>
<feature type="domain" description="Tyrosine-protein phosphatase" evidence="5">
    <location>
        <begin position="655"/>
        <end position="911"/>
    </location>
</feature>
<feature type="region of interest" description="Disordered" evidence="7">
    <location>
        <begin position="380"/>
        <end position="412"/>
    </location>
</feature>
<feature type="region of interest" description="Disordered" evidence="7">
    <location>
        <begin position="430"/>
        <end position="475"/>
    </location>
</feature>
<feature type="compositionally biased region" description="Polar residues" evidence="7">
    <location>
        <begin position="398"/>
        <end position="408"/>
    </location>
</feature>
<feature type="compositionally biased region" description="Polar residues" evidence="7">
    <location>
        <begin position="430"/>
        <end position="456"/>
    </location>
</feature>
<feature type="active site" description="Phosphocysteine intermediate" evidence="5 6">
    <location>
        <position position="852"/>
    </location>
</feature>
<feature type="binding site" evidence="1">
    <location>
        <position position="820"/>
    </location>
    <ligand>
        <name>substrate</name>
    </ligand>
</feature>
<feature type="binding site" evidence="1">
    <location>
        <begin position="852"/>
        <end position="858"/>
    </location>
    <ligand>
        <name>substrate</name>
    </ligand>
</feature>
<feature type="binding site" evidence="1">
    <location>
        <position position="896"/>
    </location>
    <ligand>
        <name>substrate</name>
    </ligand>
</feature>
<feature type="modified residue" description="Phosphoserine" evidence="2">
    <location>
        <position position="474"/>
    </location>
</feature>
<feature type="sequence variant" id="VAR_061033" description="In dbSNP:rs3189128.">
    <original>T</original>
    <variation>S</variation>
    <location>
        <position position="924"/>
    </location>
</feature>
<feature type="sequence conflict" description="In Ref. 2; BAG37355." evidence="12" ref="2">
    <original>K</original>
    <variation>E</variation>
    <location>
        <position position="131"/>
    </location>
</feature>
<feature type="sequence conflict" description="In Ref. 4; no nucleotide entry." evidence="12" ref="4">
    <original>G</original>
    <variation>K</variation>
    <location>
        <position position="772"/>
    </location>
</feature>
<feature type="sequence conflict" description="In Ref. 2; BAG37355." evidence="12" ref="2">
    <original>I</original>
    <variation>V</variation>
    <location>
        <position position="863"/>
    </location>
</feature>
<feature type="strand" evidence="16">
    <location>
        <begin position="516"/>
        <end position="520"/>
    </location>
</feature>
<feature type="strand" evidence="13">
    <location>
        <begin position="524"/>
        <end position="526"/>
    </location>
</feature>
<feature type="strand" evidence="16">
    <location>
        <begin position="530"/>
        <end position="535"/>
    </location>
</feature>
<feature type="helix" evidence="16">
    <location>
        <begin position="536"/>
        <end position="538"/>
    </location>
</feature>
<feature type="strand" evidence="16">
    <location>
        <begin position="540"/>
        <end position="547"/>
    </location>
</feature>
<feature type="strand" evidence="13">
    <location>
        <begin position="549"/>
        <end position="551"/>
    </location>
</feature>
<feature type="helix" evidence="16">
    <location>
        <begin position="552"/>
        <end position="555"/>
    </location>
</feature>
<feature type="strand" evidence="16">
    <location>
        <begin position="556"/>
        <end position="558"/>
    </location>
</feature>
<feature type="strand" evidence="16">
    <location>
        <begin position="565"/>
        <end position="569"/>
    </location>
</feature>
<feature type="helix" evidence="16">
    <location>
        <begin position="579"/>
        <end position="587"/>
    </location>
</feature>
<feature type="helix" evidence="16">
    <location>
        <begin position="589"/>
        <end position="591"/>
    </location>
</feature>
<feature type="helix" evidence="17">
    <location>
        <begin position="593"/>
        <end position="595"/>
    </location>
</feature>
<feature type="strand" evidence="16">
    <location>
        <begin position="596"/>
        <end position="602"/>
    </location>
</feature>
<feature type="strand" evidence="15">
    <location>
        <begin position="605"/>
        <end position="609"/>
    </location>
</feature>
<feature type="helix" evidence="14">
    <location>
        <begin position="639"/>
        <end position="651"/>
    </location>
</feature>
<feature type="helix" evidence="14">
    <location>
        <begin position="654"/>
        <end position="661"/>
    </location>
</feature>
<feature type="turn" evidence="14">
    <location>
        <begin position="677"/>
        <end position="679"/>
    </location>
</feature>
<feature type="helix" evidence="14">
    <location>
        <begin position="680"/>
        <end position="682"/>
    </location>
</feature>
<feature type="helix" evidence="14">
    <location>
        <begin position="692"/>
        <end position="694"/>
    </location>
</feature>
<feature type="strand" evidence="14">
    <location>
        <begin position="695"/>
        <end position="697"/>
    </location>
</feature>
<feature type="strand" evidence="14">
    <location>
        <begin position="704"/>
        <end position="713"/>
    </location>
</feature>
<feature type="strand" evidence="14">
    <location>
        <begin position="720"/>
        <end position="726"/>
    </location>
</feature>
<feature type="helix" evidence="14">
    <location>
        <begin position="731"/>
        <end position="733"/>
    </location>
</feature>
<feature type="helix" evidence="14">
    <location>
        <begin position="734"/>
        <end position="743"/>
    </location>
</feature>
<feature type="strand" evidence="14">
    <location>
        <begin position="748"/>
        <end position="751"/>
    </location>
</feature>
<feature type="strand" evidence="14">
    <location>
        <begin position="755"/>
        <end position="757"/>
    </location>
</feature>
<feature type="strand" evidence="14">
    <location>
        <begin position="773"/>
        <end position="776"/>
    </location>
</feature>
<feature type="strand" evidence="14">
    <location>
        <begin position="779"/>
        <end position="783"/>
    </location>
</feature>
<feature type="strand" evidence="14">
    <location>
        <begin position="790"/>
        <end position="801"/>
    </location>
</feature>
<feature type="turn" evidence="14">
    <location>
        <begin position="802"/>
        <end position="805"/>
    </location>
</feature>
<feature type="strand" evidence="14">
    <location>
        <begin position="806"/>
        <end position="815"/>
    </location>
</feature>
<feature type="strand" evidence="14">
    <location>
        <begin position="820"/>
        <end position="823"/>
    </location>
</feature>
<feature type="helix" evidence="14">
    <location>
        <begin position="828"/>
        <end position="841"/>
    </location>
</feature>
<feature type="strand" evidence="14">
    <location>
        <begin position="848"/>
        <end position="851"/>
    </location>
</feature>
<feature type="strand" evidence="14">
    <location>
        <begin position="853"/>
        <end position="857"/>
    </location>
</feature>
<feature type="helix" evidence="14">
    <location>
        <begin position="858"/>
        <end position="873"/>
    </location>
</feature>
<feature type="helix" evidence="14">
    <location>
        <begin position="880"/>
        <end position="888"/>
    </location>
</feature>
<feature type="helix" evidence="14">
    <location>
        <begin position="898"/>
        <end position="911"/>
    </location>
</feature>